<feature type="chain" id="PRO_0000332974" description="DnaJ homolog subfamily C member 27">
    <location>
        <begin position="1"/>
        <end position="273"/>
    </location>
</feature>
<feature type="domain" description="J" evidence="3">
    <location>
        <begin position="217"/>
        <end position="273"/>
    </location>
</feature>
<feature type="region of interest" description="Required for interaction with MAPK1" evidence="2">
    <location>
        <begin position="1"/>
        <end position="18"/>
    </location>
</feature>
<feature type="binding site" evidence="1">
    <location>
        <begin position="23"/>
        <end position="30"/>
    </location>
    <ligand>
        <name>GTP</name>
        <dbReference type="ChEBI" id="CHEBI:37565"/>
    </ligand>
</feature>
<feature type="binding site" evidence="1">
    <location>
        <begin position="71"/>
        <end position="75"/>
    </location>
    <ligand>
        <name>GTP</name>
        <dbReference type="ChEBI" id="CHEBI:37565"/>
    </ligand>
</feature>
<feature type="binding site" evidence="1">
    <location>
        <begin position="134"/>
        <end position="137"/>
    </location>
    <ligand>
        <name>GTP</name>
        <dbReference type="ChEBI" id="CHEBI:37565"/>
    </ligand>
</feature>
<gene>
    <name type="primary">DNAJC27</name>
    <name type="synonym">RBJ</name>
</gene>
<organism>
    <name type="scientific">Bos taurus</name>
    <name type="common">Bovine</name>
    <dbReference type="NCBI Taxonomy" id="9913"/>
    <lineage>
        <taxon>Eukaryota</taxon>
        <taxon>Metazoa</taxon>
        <taxon>Chordata</taxon>
        <taxon>Craniata</taxon>
        <taxon>Vertebrata</taxon>
        <taxon>Euteleostomi</taxon>
        <taxon>Mammalia</taxon>
        <taxon>Eutheria</taxon>
        <taxon>Laurasiatheria</taxon>
        <taxon>Artiodactyla</taxon>
        <taxon>Ruminantia</taxon>
        <taxon>Pecora</taxon>
        <taxon>Bovidae</taxon>
        <taxon>Bovinae</taxon>
        <taxon>Bos</taxon>
    </lineage>
</organism>
<comment type="function">
    <text evidence="2">GTPase which can activate the MEK/ERK pathway and induce cell transformation when overexpressed. May act as a nuclear scaffold for MAPK1, probably by association with MAPK1 nuclear export signal leading to enhanced ERK1/ERK2 signaling.</text>
</comment>
<comment type="subunit">
    <text evidence="2">Interacts directly with MAPK1 (wild-type and kinase-deficient forms). Interacts directly (in GTP-bound form) with MAP2K1 (wild-type and kinase-deficient forms).</text>
</comment>
<comment type="subcellular location">
    <subcellularLocation>
        <location evidence="2">Nucleus</location>
    </subcellularLocation>
</comment>
<comment type="similarity">
    <text evidence="4">Belongs to the small GTPase superfamily. Rab family.</text>
</comment>
<evidence type="ECO:0000250" key="1"/>
<evidence type="ECO:0000250" key="2">
    <source>
        <dbReference type="UniProtKB" id="Q8CFP6"/>
    </source>
</evidence>
<evidence type="ECO:0000255" key="3">
    <source>
        <dbReference type="PROSITE-ProRule" id="PRU00286"/>
    </source>
</evidence>
<evidence type="ECO:0000305" key="4"/>
<dbReference type="EMBL" id="BC140536">
    <property type="protein sequence ID" value="AAI40537.1"/>
    <property type="molecule type" value="mRNA"/>
</dbReference>
<dbReference type="RefSeq" id="NP_001091578.1">
    <property type="nucleotide sequence ID" value="NM_001098109.1"/>
</dbReference>
<dbReference type="RefSeq" id="XP_059747399.1">
    <property type="nucleotide sequence ID" value="XM_059891416.1"/>
</dbReference>
<dbReference type="SMR" id="A5D7F5"/>
<dbReference type="FunCoup" id="A5D7F5">
    <property type="interactions" value="1332"/>
</dbReference>
<dbReference type="STRING" id="9913.ENSBTAP00000057139"/>
<dbReference type="PaxDb" id="9913-ENSBTAP00000024278"/>
<dbReference type="Ensembl" id="ENSBTAT00000024278.4">
    <property type="protein sequence ID" value="ENSBTAP00000024278.3"/>
    <property type="gene ID" value="ENSBTAG00000018239.5"/>
</dbReference>
<dbReference type="GeneID" id="540033"/>
<dbReference type="KEGG" id="bta:540033"/>
<dbReference type="CTD" id="51277"/>
<dbReference type="VEuPathDB" id="HostDB:ENSBTAG00000018239"/>
<dbReference type="VGNC" id="VGNC:59212">
    <property type="gene designation" value="DNAJC27"/>
</dbReference>
<dbReference type="eggNOG" id="KOG0098">
    <property type="taxonomic scope" value="Eukaryota"/>
</dbReference>
<dbReference type="GeneTree" id="ENSGT00940000157133"/>
<dbReference type="HOGENOM" id="CLU_041217_16_0_1"/>
<dbReference type="InParanoid" id="A5D7F5"/>
<dbReference type="OMA" id="NMENVVF"/>
<dbReference type="OrthoDB" id="8830751at2759"/>
<dbReference type="TreeFam" id="TF328564"/>
<dbReference type="Proteomes" id="UP000009136">
    <property type="component" value="Chromosome 11"/>
</dbReference>
<dbReference type="Bgee" id="ENSBTAG00000018239">
    <property type="expression patterns" value="Expressed in spermatid and 102 other cell types or tissues"/>
</dbReference>
<dbReference type="GO" id="GO:0005634">
    <property type="term" value="C:nucleus"/>
    <property type="evidence" value="ECO:0007669"/>
    <property type="project" value="UniProtKB-SubCell"/>
</dbReference>
<dbReference type="GO" id="GO:0005525">
    <property type="term" value="F:GTP binding"/>
    <property type="evidence" value="ECO:0007669"/>
    <property type="project" value="UniProtKB-KW"/>
</dbReference>
<dbReference type="GO" id="GO:0003924">
    <property type="term" value="F:GTPase activity"/>
    <property type="evidence" value="ECO:0000318"/>
    <property type="project" value="GO_Central"/>
</dbReference>
<dbReference type="GO" id="GO:0006886">
    <property type="term" value="P:intracellular protein transport"/>
    <property type="evidence" value="ECO:0000318"/>
    <property type="project" value="GO_Central"/>
</dbReference>
<dbReference type="GO" id="GO:0070374">
    <property type="term" value="P:positive regulation of ERK1 and ERK2 cascade"/>
    <property type="evidence" value="ECO:0007669"/>
    <property type="project" value="Ensembl"/>
</dbReference>
<dbReference type="CDD" id="cd06257">
    <property type="entry name" value="DnaJ"/>
    <property type="match status" value="1"/>
</dbReference>
<dbReference type="CDD" id="cd04119">
    <property type="entry name" value="RJL"/>
    <property type="match status" value="1"/>
</dbReference>
<dbReference type="FunFam" id="3.40.50.300:FF:000697">
    <property type="entry name" value="DnaJ homolog subfamily C member 27"/>
    <property type="match status" value="1"/>
</dbReference>
<dbReference type="FunFam" id="1.10.287.110:FF:000019">
    <property type="entry name" value="dnaJ homolog subfamily C member 27"/>
    <property type="match status" value="1"/>
</dbReference>
<dbReference type="Gene3D" id="1.10.287.110">
    <property type="entry name" value="DnaJ domain"/>
    <property type="match status" value="1"/>
</dbReference>
<dbReference type="Gene3D" id="3.40.50.300">
    <property type="entry name" value="P-loop containing nucleotide triphosphate hydrolases"/>
    <property type="match status" value="1"/>
</dbReference>
<dbReference type="InterPro" id="IPR001623">
    <property type="entry name" value="DnaJ_domain"/>
</dbReference>
<dbReference type="InterPro" id="IPR036869">
    <property type="entry name" value="J_dom_sf"/>
</dbReference>
<dbReference type="InterPro" id="IPR027417">
    <property type="entry name" value="P-loop_NTPase"/>
</dbReference>
<dbReference type="InterPro" id="IPR050227">
    <property type="entry name" value="Rab"/>
</dbReference>
<dbReference type="InterPro" id="IPR005225">
    <property type="entry name" value="Small_GTP-bd"/>
</dbReference>
<dbReference type="InterPro" id="IPR001806">
    <property type="entry name" value="Small_GTPase"/>
</dbReference>
<dbReference type="NCBIfam" id="TIGR00231">
    <property type="entry name" value="small_GTP"/>
    <property type="match status" value="1"/>
</dbReference>
<dbReference type="PANTHER" id="PTHR47977">
    <property type="entry name" value="RAS-RELATED PROTEIN RAB"/>
    <property type="match status" value="1"/>
</dbReference>
<dbReference type="Pfam" id="PF00226">
    <property type="entry name" value="DnaJ"/>
    <property type="match status" value="1"/>
</dbReference>
<dbReference type="Pfam" id="PF00071">
    <property type="entry name" value="Ras"/>
    <property type="match status" value="1"/>
</dbReference>
<dbReference type="PRINTS" id="PR00625">
    <property type="entry name" value="JDOMAIN"/>
</dbReference>
<dbReference type="PRINTS" id="PR00449">
    <property type="entry name" value="RASTRNSFRMNG"/>
</dbReference>
<dbReference type="SMART" id="SM00271">
    <property type="entry name" value="DnaJ"/>
    <property type="match status" value="1"/>
</dbReference>
<dbReference type="SMART" id="SM00175">
    <property type="entry name" value="RAB"/>
    <property type="match status" value="1"/>
</dbReference>
<dbReference type="SMART" id="SM00176">
    <property type="entry name" value="RAN"/>
    <property type="match status" value="1"/>
</dbReference>
<dbReference type="SMART" id="SM00173">
    <property type="entry name" value="RAS"/>
    <property type="match status" value="1"/>
</dbReference>
<dbReference type="SMART" id="SM00174">
    <property type="entry name" value="RHO"/>
    <property type="match status" value="1"/>
</dbReference>
<dbReference type="SUPFAM" id="SSF46565">
    <property type="entry name" value="Chaperone J-domain"/>
    <property type="match status" value="1"/>
</dbReference>
<dbReference type="SUPFAM" id="SSF52540">
    <property type="entry name" value="P-loop containing nucleoside triphosphate hydrolases"/>
    <property type="match status" value="1"/>
</dbReference>
<dbReference type="PROSITE" id="PS50076">
    <property type="entry name" value="DNAJ_2"/>
    <property type="match status" value="1"/>
</dbReference>
<dbReference type="PROSITE" id="PS51419">
    <property type="entry name" value="RAB"/>
    <property type="match status" value="1"/>
</dbReference>
<reference key="1">
    <citation type="submission" date="2007-04" db="EMBL/GenBank/DDBJ databases">
        <authorList>
            <consortium name="NIH - Mammalian Gene Collection (MGC) project"/>
        </authorList>
    </citation>
    <scope>NUCLEOTIDE SEQUENCE [LARGE SCALE MRNA]</scope>
    <source>
        <strain>Hereford</strain>
        <tissue>Fetal skin</tissue>
    </source>
</reference>
<keyword id="KW-0342">GTP-binding</keyword>
<keyword id="KW-0547">Nucleotide-binding</keyword>
<keyword id="KW-0539">Nucleus</keyword>
<keyword id="KW-1185">Reference proteome</keyword>
<name>DJC27_BOVIN</name>
<sequence length="273" mass="30759">MEASMPKRKEPGKSLRIKVISMGNAEVGKSCIIKRYCEKRFVSKYLATIGIDYGVTKVQVRDREIKVNIFDMAGDPFFYEVRNEFYKDTQGVILVYDVGQKDSFDALDTWLAEMKQDLGPHGNMENIVFAVCANKIDCTKHRCVDESEGRLWAESKGFLYFETSAQTGEGINEMFQTFYLSIVDLCENGGKRPNTNSSASFTKEQADTIRRIRSSKDSWDMLGVKPGASRDEVNKAYRKLAVLLHPDKCVAPGSEDAFKAVVNARTALLKNIK</sequence>
<accession>A5D7F5</accession>
<proteinExistence type="evidence at transcript level"/>
<protein>
    <recommendedName>
        <fullName>DnaJ homolog subfamily C member 27</fullName>
    </recommendedName>
    <alternativeName>
        <fullName>Rab and DnaJ domain-containing protein</fullName>
    </alternativeName>
</protein>